<proteinExistence type="inferred from homology"/>
<comment type="catalytic activity">
    <reaction evidence="1">
        <text>tRNA(Arg) + L-arginine + ATP = L-arginyl-tRNA(Arg) + AMP + diphosphate</text>
        <dbReference type="Rhea" id="RHEA:20301"/>
        <dbReference type="Rhea" id="RHEA-COMP:9658"/>
        <dbReference type="Rhea" id="RHEA-COMP:9673"/>
        <dbReference type="ChEBI" id="CHEBI:30616"/>
        <dbReference type="ChEBI" id="CHEBI:32682"/>
        <dbReference type="ChEBI" id="CHEBI:33019"/>
        <dbReference type="ChEBI" id="CHEBI:78442"/>
        <dbReference type="ChEBI" id="CHEBI:78513"/>
        <dbReference type="ChEBI" id="CHEBI:456215"/>
        <dbReference type="EC" id="6.1.1.19"/>
    </reaction>
</comment>
<comment type="subunit">
    <text evidence="1">Monomer.</text>
</comment>
<comment type="subcellular location">
    <subcellularLocation>
        <location evidence="1">Cytoplasm</location>
    </subcellularLocation>
</comment>
<comment type="similarity">
    <text evidence="1">Belongs to the class-I aminoacyl-tRNA synthetase family.</text>
</comment>
<gene>
    <name evidence="1" type="primary">argS</name>
    <name type="ordered locus">LHK_01003</name>
</gene>
<dbReference type="EC" id="6.1.1.19" evidence="1"/>
<dbReference type="EMBL" id="CP001154">
    <property type="protein sequence ID" value="ACO73995.1"/>
    <property type="molecule type" value="Genomic_DNA"/>
</dbReference>
<dbReference type="RefSeq" id="WP_012696486.1">
    <property type="nucleotide sequence ID" value="NC_012559.1"/>
</dbReference>
<dbReference type="SMR" id="C1D5W4"/>
<dbReference type="STRING" id="557598.LHK_01003"/>
<dbReference type="GeneID" id="75109184"/>
<dbReference type="KEGG" id="lhk:LHK_01003"/>
<dbReference type="eggNOG" id="COG0018">
    <property type="taxonomic scope" value="Bacteria"/>
</dbReference>
<dbReference type="HOGENOM" id="CLU_006406_5_1_4"/>
<dbReference type="Proteomes" id="UP000002010">
    <property type="component" value="Chromosome"/>
</dbReference>
<dbReference type="GO" id="GO:0005737">
    <property type="term" value="C:cytoplasm"/>
    <property type="evidence" value="ECO:0007669"/>
    <property type="project" value="UniProtKB-SubCell"/>
</dbReference>
<dbReference type="GO" id="GO:0004814">
    <property type="term" value="F:arginine-tRNA ligase activity"/>
    <property type="evidence" value="ECO:0007669"/>
    <property type="project" value="UniProtKB-UniRule"/>
</dbReference>
<dbReference type="GO" id="GO:0005524">
    <property type="term" value="F:ATP binding"/>
    <property type="evidence" value="ECO:0007669"/>
    <property type="project" value="UniProtKB-UniRule"/>
</dbReference>
<dbReference type="GO" id="GO:0006420">
    <property type="term" value="P:arginyl-tRNA aminoacylation"/>
    <property type="evidence" value="ECO:0007669"/>
    <property type="project" value="UniProtKB-UniRule"/>
</dbReference>
<dbReference type="CDD" id="cd07956">
    <property type="entry name" value="Anticodon_Ia_Arg"/>
    <property type="match status" value="1"/>
</dbReference>
<dbReference type="CDD" id="cd00671">
    <property type="entry name" value="ArgRS_core"/>
    <property type="match status" value="1"/>
</dbReference>
<dbReference type="FunFam" id="3.40.50.620:FF:000030">
    <property type="entry name" value="Arginine--tRNA ligase"/>
    <property type="match status" value="1"/>
</dbReference>
<dbReference type="FunFam" id="1.10.730.10:FF:000006">
    <property type="entry name" value="Arginyl-tRNA synthetase 2, mitochondrial"/>
    <property type="match status" value="1"/>
</dbReference>
<dbReference type="Gene3D" id="3.30.1360.70">
    <property type="entry name" value="Arginyl tRNA synthetase N-terminal domain"/>
    <property type="match status" value="1"/>
</dbReference>
<dbReference type="Gene3D" id="3.40.50.620">
    <property type="entry name" value="HUPs"/>
    <property type="match status" value="1"/>
</dbReference>
<dbReference type="Gene3D" id="1.10.730.10">
    <property type="entry name" value="Isoleucyl-tRNA Synthetase, Domain 1"/>
    <property type="match status" value="1"/>
</dbReference>
<dbReference type="HAMAP" id="MF_00123">
    <property type="entry name" value="Arg_tRNA_synth"/>
    <property type="match status" value="1"/>
</dbReference>
<dbReference type="InterPro" id="IPR001412">
    <property type="entry name" value="aa-tRNA-synth_I_CS"/>
</dbReference>
<dbReference type="InterPro" id="IPR001278">
    <property type="entry name" value="Arg-tRNA-ligase"/>
</dbReference>
<dbReference type="InterPro" id="IPR005148">
    <property type="entry name" value="Arg-tRNA-synth_N"/>
</dbReference>
<dbReference type="InterPro" id="IPR036695">
    <property type="entry name" value="Arg-tRNA-synth_N_sf"/>
</dbReference>
<dbReference type="InterPro" id="IPR035684">
    <property type="entry name" value="ArgRS_core"/>
</dbReference>
<dbReference type="InterPro" id="IPR008909">
    <property type="entry name" value="DALR_anticod-bd"/>
</dbReference>
<dbReference type="InterPro" id="IPR014729">
    <property type="entry name" value="Rossmann-like_a/b/a_fold"/>
</dbReference>
<dbReference type="InterPro" id="IPR009080">
    <property type="entry name" value="tRNAsynth_Ia_anticodon-bd"/>
</dbReference>
<dbReference type="NCBIfam" id="TIGR00456">
    <property type="entry name" value="argS"/>
    <property type="match status" value="1"/>
</dbReference>
<dbReference type="PANTHER" id="PTHR11956:SF5">
    <property type="entry name" value="ARGININE--TRNA LIGASE, CYTOPLASMIC"/>
    <property type="match status" value="1"/>
</dbReference>
<dbReference type="PANTHER" id="PTHR11956">
    <property type="entry name" value="ARGINYL-TRNA SYNTHETASE"/>
    <property type="match status" value="1"/>
</dbReference>
<dbReference type="Pfam" id="PF03485">
    <property type="entry name" value="Arg_tRNA_synt_N"/>
    <property type="match status" value="1"/>
</dbReference>
<dbReference type="Pfam" id="PF05746">
    <property type="entry name" value="DALR_1"/>
    <property type="match status" value="1"/>
</dbReference>
<dbReference type="Pfam" id="PF00750">
    <property type="entry name" value="tRNA-synt_1d"/>
    <property type="match status" value="1"/>
</dbReference>
<dbReference type="PRINTS" id="PR01038">
    <property type="entry name" value="TRNASYNTHARG"/>
</dbReference>
<dbReference type="SMART" id="SM01016">
    <property type="entry name" value="Arg_tRNA_synt_N"/>
    <property type="match status" value="1"/>
</dbReference>
<dbReference type="SMART" id="SM00836">
    <property type="entry name" value="DALR_1"/>
    <property type="match status" value="1"/>
</dbReference>
<dbReference type="SUPFAM" id="SSF47323">
    <property type="entry name" value="Anticodon-binding domain of a subclass of class I aminoacyl-tRNA synthetases"/>
    <property type="match status" value="1"/>
</dbReference>
<dbReference type="SUPFAM" id="SSF55190">
    <property type="entry name" value="Arginyl-tRNA synthetase (ArgRS), N-terminal 'additional' domain"/>
    <property type="match status" value="1"/>
</dbReference>
<dbReference type="SUPFAM" id="SSF52374">
    <property type="entry name" value="Nucleotidylyl transferase"/>
    <property type="match status" value="1"/>
</dbReference>
<dbReference type="PROSITE" id="PS00178">
    <property type="entry name" value="AA_TRNA_LIGASE_I"/>
    <property type="match status" value="1"/>
</dbReference>
<feature type="chain" id="PRO_1000198912" description="Arginine--tRNA ligase">
    <location>
        <begin position="1"/>
        <end position="573"/>
    </location>
</feature>
<feature type="short sequence motif" description="'HIGH' region">
    <location>
        <begin position="122"/>
        <end position="132"/>
    </location>
</feature>
<keyword id="KW-0030">Aminoacyl-tRNA synthetase</keyword>
<keyword id="KW-0067">ATP-binding</keyword>
<keyword id="KW-0963">Cytoplasm</keyword>
<keyword id="KW-0436">Ligase</keyword>
<keyword id="KW-0547">Nucleotide-binding</keyword>
<keyword id="KW-0648">Protein biosynthesis</keyword>
<keyword id="KW-1185">Reference proteome</keyword>
<name>SYR_LARHH</name>
<reference key="1">
    <citation type="journal article" date="2009" name="PLoS Genet.">
        <title>The complete genome and proteome of Laribacter hongkongensis reveal potential mechanisms for adaptations to different temperatures and habitats.</title>
        <authorList>
            <person name="Woo P.C.Y."/>
            <person name="Lau S.K.P."/>
            <person name="Tse H."/>
            <person name="Teng J.L.L."/>
            <person name="Curreem S.O."/>
            <person name="Tsang A.K.L."/>
            <person name="Fan R.Y.Y."/>
            <person name="Wong G.K.M."/>
            <person name="Huang Y."/>
            <person name="Loman N.J."/>
            <person name="Snyder L.A.S."/>
            <person name="Cai J.J."/>
            <person name="Huang J.-D."/>
            <person name="Mak W."/>
            <person name="Pallen M.J."/>
            <person name="Lok S."/>
            <person name="Yuen K.-Y."/>
        </authorList>
    </citation>
    <scope>NUCLEOTIDE SEQUENCE [LARGE SCALE GENOMIC DNA]</scope>
    <source>
        <strain>HLHK9</strain>
    </source>
</reference>
<organism>
    <name type="scientific">Laribacter hongkongensis (strain HLHK9)</name>
    <dbReference type="NCBI Taxonomy" id="557598"/>
    <lineage>
        <taxon>Bacteria</taxon>
        <taxon>Pseudomonadati</taxon>
        <taxon>Pseudomonadota</taxon>
        <taxon>Betaproteobacteria</taxon>
        <taxon>Neisseriales</taxon>
        <taxon>Aquaspirillaceae</taxon>
        <taxon>Laribacter</taxon>
    </lineage>
</organism>
<accession>C1D5W4</accession>
<evidence type="ECO:0000255" key="1">
    <source>
        <dbReference type="HAMAP-Rule" id="MF_00123"/>
    </source>
</evidence>
<protein>
    <recommendedName>
        <fullName evidence="1">Arginine--tRNA ligase</fullName>
        <ecNumber evidence="1">6.1.1.19</ecNumber>
    </recommendedName>
    <alternativeName>
        <fullName evidence="1">Arginyl-tRNA synthetase</fullName>
        <shortName evidence="1">ArgRS</shortName>
    </alternativeName>
</protein>
<sequence length="573" mass="63639">MTLTQLLHDKLAAALIAAGVPDAQPLLQPASRPEFGDFQANGVMAAAKQRKMNPRELAQQVIDKLDLAGIASKIEIAGPGFINITLAPDFLAKRLDTVLDDARLGVRSVTEPQRVMVEYSSPNLAKEMHVGHLRSTIIGDTLARVVEFLGNNMVRGNHVGDWGTQFGMLTAYLVETRQAGKADLELSDLETFYRNAKIRFDEDPVFADTARNYVVRLQGGDADVLKLWEQFVDVSLAHCEAVYRKLGVGLTRADVRGESAYNDDLPVIVDELAAKNLLSEDDGAKVVYLDEFRNHDGDPMGVIVQKKDGGFLYTTTDLGAVRYRHKELNLDRVIYVVDARQSQHFQQMFTICRKAGFAPEAMSLEHVGFGTMMGDDGKPFKTRSGGTVKLIELLDEAEERAYALVSEKNPDLPEEEKRKIAHAVGIGAVKYADLSKNRNSDYIFNWDLMLAFEGNTAPYLQYAYTRVASIFRKVDRFDASAPLLITEPAEKQLALMLAQFSDVLNEVARTCFPHLLTQYLYQVATQFMRFYEACPILKSEGATQASRLKLARITADTLKTGLGLLGIEVLESM</sequence>